<keyword id="KW-0333">Golgi apparatus</keyword>
<keyword id="KW-0472">Membrane</keyword>
<keyword id="KW-0611">Plant defense</keyword>
<keyword id="KW-0653">Protein transport</keyword>
<keyword id="KW-1185">Reference proteome</keyword>
<keyword id="KW-0812">Transmembrane</keyword>
<keyword id="KW-1133">Transmembrane helix</keyword>
<keyword id="KW-0813">Transport</keyword>
<organism>
    <name type="scientific">Arabidopsis thaliana</name>
    <name type="common">Mouse-ear cress</name>
    <dbReference type="NCBI Taxonomy" id="3702"/>
    <lineage>
        <taxon>Eukaryota</taxon>
        <taxon>Viridiplantae</taxon>
        <taxon>Streptophyta</taxon>
        <taxon>Embryophyta</taxon>
        <taxon>Tracheophyta</taxon>
        <taxon>Spermatophyta</taxon>
        <taxon>Magnoliopsida</taxon>
        <taxon>eudicotyledons</taxon>
        <taxon>Gunneridae</taxon>
        <taxon>Pentapetalae</taxon>
        <taxon>rosids</taxon>
        <taxon>malvids</taxon>
        <taxon>Brassicales</taxon>
        <taxon>Brassicaceae</taxon>
        <taxon>Camelineae</taxon>
        <taxon>Arabidopsis</taxon>
    </lineage>
</organism>
<proteinExistence type="evidence at protein level"/>
<reference key="1">
    <citation type="journal article" date="2000" name="Mol. Biol. Cell">
        <title>AtVPS45 complex formation at the trans-Golgi network.</title>
        <authorList>
            <person name="Bassham D.C."/>
            <person name="Sanderfoot A.A."/>
            <person name="Kovaleva V."/>
            <person name="Zheng H."/>
            <person name="Raikhel N.V."/>
        </authorList>
    </citation>
    <scope>NUCLEOTIDE SEQUENCE</scope>
    <scope>INTERACTION WITH VPS45</scope>
    <source>
        <strain>cv. Columbia</strain>
    </source>
</reference>
<reference key="2">
    <citation type="journal article" date="1999" name="Nature">
        <title>Sequence and analysis of chromosome 4 of the plant Arabidopsis thaliana.</title>
        <authorList>
            <person name="Mayer K.F.X."/>
            <person name="Schueller C."/>
            <person name="Wambutt R."/>
            <person name="Murphy G."/>
            <person name="Volckaert G."/>
            <person name="Pohl T."/>
            <person name="Duesterhoeft A."/>
            <person name="Stiekema W."/>
            <person name="Entian K.-D."/>
            <person name="Terryn N."/>
            <person name="Harris B."/>
            <person name="Ansorge W."/>
            <person name="Brandt P."/>
            <person name="Grivell L.A."/>
            <person name="Rieger M."/>
            <person name="Weichselgartner M."/>
            <person name="de Simone V."/>
            <person name="Obermaier B."/>
            <person name="Mache R."/>
            <person name="Mueller M."/>
            <person name="Kreis M."/>
            <person name="Delseny M."/>
            <person name="Puigdomenech P."/>
            <person name="Watson M."/>
            <person name="Schmidtheini T."/>
            <person name="Reichert B."/>
            <person name="Portetelle D."/>
            <person name="Perez-Alonso M."/>
            <person name="Boutry M."/>
            <person name="Bancroft I."/>
            <person name="Vos P."/>
            <person name="Hoheisel J."/>
            <person name="Zimmermann W."/>
            <person name="Wedler H."/>
            <person name="Ridley P."/>
            <person name="Langham S.-A."/>
            <person name="McCullagh B."/>
            <person name="Bilham L."/>
            <person name="Robben J."/>
            <person name="van der Schueren J."/>
            <person name="Grymonprez B."/>
            <person name="Chuang Y.-J."/>
            <person name="Vandenbussche F."/>
            <person name="Braeken M."/>
            <person name="Weltjens I."/>
            <person name="Voet M."/>
            <person name="Bastiaens I."/>
            <person name="Aert R."/>
            <person name="Defoor E."/>
            <person name="Weitzenegger T."/>
            <person name="Bothe G."/>
            <person name="Ramsperger U."/>
            <person name="Hilbert H."/>
            <person name="Braun M."/>
            <person name="Holzer E."/>
            <person name="Brandt A."/>
            <person name="Peters S."/>
            <person name="van Staveren M."/>
            <person name="Dirkse W."/>
            <person name="Mooijman P."/>
            <person name="Klein Lankhorst R."/>
            <person name="Rose M."/>
            <person name="Hauf J."/>
            <person name="Koetter P."/>
            <person name="Berneiser S."/>
            <person name="Hempel S."/>
            <person name="Feldpausch M."/>
            <person name="Lamberth S."/>
            <person name="Van den Daele H."/>
            <person name="De Keyser A."/>
            <person name="Buysshaert C."/>
            <person name="Gielen J."/>
            <person name="Villarroel R."/>
            <person name="De Clercq R."/>
            <person name="van Montagu M."/>
            <person name="Rogers J."/>
            <person name="Cronin A."/>
            <person name="Quail M.A."/>
            <person name="Bray-Allen S."/>
            <person name="Clark L."/>
            <person name="Doggett J."/>
            <person name="Hall S."/>
            <person name="Kay M."/>
            <person name="Lennard N."/>
            <person name="McLay K."/>
            <person name="Mayes R."/>
            <person name="Pettett A."/>
            <person name="Rajandream M.A."/>
            <person name="Lyne M."/>
            <person name="Benes V."/>
            <person name="Rechmann S."/>
            <person name="Borkova D."/>
            <person name="Bloecker H."/>
            <person name="Scharfe M."/>
            <person name="Grimm M."/>
            <person name="Loehnert T.-H."/>
            <person name="Dose S."/>
            <person name="de Haan M."/>
            <person name="Maarse A.C."/>
            <person name="Schaefer M."/>
            <person name="Mueller-Auer S."/>
            <person name="Gabel C."/>
            <person name="Fuchs M."/>
            <person name="Fartmann B."/>
            <person name="Granderath K."/>
            <person name="Dauner D."/>
            <person name="Herzl A."/>
            <person name="Neumann S."/>
            <person name="Argiriou A."/>
            <person name="Vitale D."/>
            <person name="Liguori R."/>
            <person name="Piravandi E."/>
            <person name="Massenet O."/>
            <person name="Quigley F."/>
            <person name="Clabauld G."/>
            <person name="Muendlein A."/>
            <person name="Felber R."/>
            <person name="Schnabl S."/>
            <person name="Hiller R."/>
            <person name="Schmidt W."/>
            <person name="Lecharny A."/>
            <person name="Aubourg S."/>
            <person name="Chefdor F."/>
            <person name="Cooke R."/>
            <person name="Berger C."/>
            <person name="Monfort A."/>
            <person name="Casacuberta E."/>
            <person name="Gibbons T."/>
            <person name="Weber N."/>
            <person name="Vandenbol M."/>
            <person name="Bargues M."/>
            <person name="Terol J."/>
            <person name="Torres A."/>
            <person name="Perez-Perez A."/>
            <person name="Purnelle B."/>
            <person name="Bent E."/>
            <person name="Johnson S."/>
            <person name="Tacon D."/>
            <person name="Jesse T."/>
            <person name="Heijnen L."/>
            <person name="Schwarz S."/>
            <person name="Scholler P."/>
            <person name="Heber S."/>
            <person name="Francs P."/>
            <person name="Bielke C."/>
            <person name="Frishman D."/>
            <person name="Haase D."/>
            <person name="Lemcke K."/>
            <person name="Mewes H.-W."/>
            <person name="Stocker S."/>
            <person name="Zaccaria P."/>
            <person name="Bevan M."/>
            <person name="Wilson R.K."/>
            <person name="de la Bastide M."/>
            <person name="Habermann K."/>
            <person name="Parnell L."/>
            <person name="Dedhia N."/>
            <person name="Gnoj L."/>
            <person name="Schutz K."/>
            <person name="Huang E."/>
            <person name="Spiegel L."/>
            <person name="Sekhon M."/>
            <person name="Murray J."/>
            <person name="Sheet P."/>
            <person name="Cordes M."/>
            <person name="Abu-Threideh J."/>
            <person name="Stoneking T."/>
            <person name="Kalicki J."/>
            <person name="Graves T."/>
            <person name="Harmon G."/>
            <person name="Edwards J."/>
            <person name="Latreille P."/>
            <person name="Courtney L."/>
            <person name="Cloud J."/>
            <person name="Abbott A."/>
            <person name="Scott K."/>
            <person name="Johnson D."/>
            <person name="Minx P."/>
            <person name="Bentley D."/>
            <person name="Fulton B."/>
            <person name="Miller N."/>
            <person name="Greco T."/>
            <person name="Kemp K."/>
            <person name="Kramer J."/>
            <person name="Fulton L."/>
            <person name="Mardis E."/>
            <person name="Dante M."/>
            <person name="Pepin K."/>
            <person name="Hillier L.W."/>
            <person name="Nelson J."/>
            <person name="Spieth J."/>
            <person name="Ryan E."/>
            <person name="Andrews S."/>
            <person name="Geisel C."/>
            <person name="Layman D."/>
            <person name="Du H."/>
            <person name="Ali J."/>
            <person name="Berghoff A."/>
            <person name="Jones K."/>
            <person name="Drone K."/>
            <person name="Cotton M."/>
            <person name="Joshu C."/>
            <person name="Antonoiu B."/>
            <person name="Zidanic M."/>
            <person name="Strong C."/>
            <person name="Sun H."/>
            <person name="Lamar B."/>
            <person name="Yordan C."/>
            <person name="Ma P."/>
            <person name="Zhong J."/>
            <person name="Preston R."/>
            <person name="Vil D."/>
            <person name="Shekher M."/>
            <person name="Matero A."/>
            <person name="Shah R."/>
            <person name="Swaby I.K."/>
            <person name="O'Shaughnessy A."/>
            <person name="Rodriguez M."/>
            <person name="Hoffman J."/>
            <person name="Till S."/>
            <person name="Granat S."/>
            <person name="Shohdy N."/>
            <person name="Hasegawa A."/>
            <person name="Hameed A."/>
            <person name="Lodhi M."/>
            <person name="Johnson A."/>
            <person name="Chen E."/>
            <person name="Marra M.A."/>
            <person name="Martienssen R."/>
            <person name="McCombie W.R."/>
        </authorList>
    </citation>
    <scope>NUCLEOTIDE SEQUENCE [LARGE SCALE GENOMIC DNA]</scope>
    <source>
        <strain>cv. Columbia</strain>
    </source>
</reference>
<reference key="3">
    <citation type="journal article" date="2017" name="Plant J.">
        <title>Araport11: a complete reannotation of the Arabidopsis thaliana reference genome.</title>
        <authorList>
            <person name="Cheng C.Y."/>
            <person name="Krishnakumar V."/>
            <person name="Chan A.P."/>
            <person name="Thibaud-Nissen F."/>
            <person name="Schobel S."/>
            <person name="Town C.D."/>
        </authorList>
    </citation>
    <scope>GENOME REANNOTATION</scope>
    <source>
        <strain>cv. Columbia</strain>
    </source>
</reference>
<reference key="4">
    <citation type="journal article" date="2001" name="Mol. Biol. Cell">
        <title>Interactions between syntaxins identify at least five SNARE complexes within the Golgi/prevacuolar system of the Arabidopsis cell.</title>
        <authorList>
            <person name="Sanderfoot A.A."/>
            <person name="Kovaleva V."/>
            <person name="Bassham D.C."/>
            <person name="Raikhel N.V."/>
        </authorList>
    </citation>
    <scope>INTERACTION WITH VTI12 AND SYP61</scope>
    <scope>SUBCELLULAR LOCATION</scope>
</reference>
<reference key="5">
    <citation type="journal article" date="2004" name="Cell Struct. Funct.">
        <title>Systematic analysis of SNARE molecules in Arabidopsis: dissection of the post-Golgi network in plant cells.</title>
        <authorList>
            <person name="Uemura T."/>
            <person name="Ueda T."/>
            <person name="Ohniwa R.L."/>
            <person name="Nakano A."/>
            <person name="Takeyasu K."/>
            <person name="Sato M.H."/>
        </authorList>
    </citation>
    <scope>SUBCELLULAR LOCATION</scope>
    <scope>TISSUE SPECIFICITY</scope>
</reference>
<reference key="6">
    <citation type="journal article" date="2012" name="Proc. Natl. Acad. Sci. U.S.A.">
        <title>Qa-SNAREs localized to the trans-Golgi network regulate multiple transport pathways and extracellular disease resistance in plants.</title>
        <authorList>
            <person name="Uemura T."/>
            <person name="Kim H."/>
            <person name="Saito C."/>
            <person name="Ebine K."/>
            <person name="Ueda T."/>
            <person name="Schulze-Lefert P."/>
            <person name="Nakano A."/>
        </authorList>
    </citation>
    <scope>FUNCTION</scope>
    <scope>DISRUPTION PHENOTYPE</scope>
    <scope>SUBCELLULAR LOCATION</scope>
    <scope>GENE FAMILY</scope>
    <source>
        <strain>cv. Columbia</strain>
    </source>
</reference>
<reference key="7">
    <citation type="journal article" date="2013" name="BMC Biochem.">
        <title>Functional redundancy between trans-Golgi network SNARE family members in Arabidopsis thaliana.</title>
        <authorList>
            <person name="Kim S.-J."/>
            <person name="Bassham D.C."/>
        </authorList>
    </citation>
    <scope>FUNCTION</scope>
</reference>
<dbReference type="EMBL" id="AF154574">
    <property type="protein sequence ID" value="AAD38983.1"/>
    <property type="molecule type" value="mRNA"/>
</dbReference>
<dbReference type="EMBL" id="AF001308">
    <property type="protein sequence ID" value="AAC78709.1"/>
    <property type="status" value="ALT_SEQ"/>
    <property type="molecule type" value="Genomic_DNA"/>
</dbReference>
<dbReference type="EMBL" id="AF075597">
    <property type="protein sequence ID" value="AAC28171.1"/>
    <property type="status" value="ALT_SEQ"/>
    <property type="molecule type" value="Genomic_DNA"/>
</dbReference>
<dbReference type="EMBL" id="CP002687">
    <property type="protein sequence ID" value="AEE82136.1"/>
    <property type="molecule type" value="Genomic_DNA"/>
</dbReference>
<dbReference type="PIR" id="T01521">
    <property type="entry name" value="T01521"/>
</dbReference>
<dbReference type="RefSeq" id="NP_567223.1">
    <property type="nucleotide sequence ID" value="NM_116452.4"/>
</dbReference>
<dbReference type="SMR" id="Q9SWH4"/>
<dbReference type="BioGRID" id="12798">
    <property type="interactions" value="25"/>
</dbReference>
<dbReference type="FunCoup" id="Q9SWH4">
    <property type="interactions" value="3619"/>
</dbReference>
<dbReference type="IntAct" id="Q9SWH4">
    <property type="interactions" value="22"/>
</dbReference>
<dbReference type="STRING" id="3702.Q9SWH4"/>
<dbReference type="PaxDb" id="3702-AT4G02195.1"/>
<dbReference type="ProteomicsDB" id="233051"/>
<dbReference type="EnsemblPlants" id="AT4G02195.1">
    <property type="protein sequence ID" value="AT4G02195.1"/>
    <property type="gene ID" value="AT4G02195"/>
</dbReference>
<dbReference type="GeneID" id="827505"/>
<dbReference type="Gramene" id="AT4G02195.1">
    <property type="protein sequence ID" value="AT4G02195.1"/>
    <property type="gene ID" value="AT4G02195"/>
</dbReference>
<dbReference type="KEGG" id="ath:AT4G02195"/>
<dbReference type="Araport" id="AT4G02195"/>
<dbReference type="TAIR" id="AT4G02195">
    <property type="gene designation" value="SYP42"/>
</dbReference>
<dbReference type="eggNOG" id="KOG0809">
    <property type="taxonomic scope" value="Eukaryota"/>
</dbReference>
<dbReference type="HOGENOM" id="CLU_038177_1_0_1"/>
<dbReference type="InParanoid" id="Q9SWH4"/>
<dbReference type="PhylomeDB" id="Q9SWH4"/>
<dbReference type="PRO" id="PR:Q9SWH4"/>
<dbReference type="Proteomes" id="UP000006548">
    <property type="component" value="Chromosome 4"/>
</dbReference>
<dbReference type="ExpressionAtlas" id="Q9SWH4">
    <property type="expression patterns" value="baseline and differential"/>
</dbReference>
<dbReference type="GO" id="GO:0016020">
    <property type="term" value="C:membrane"/>
    <property type="evidence" value="ECO:0007669"/>
    <property type="project" value="UniProtKB-KW"/>
</dbReference>
<dbReference type="GO" id="GO:0005802">
    <property type="term" value="C:trans-Golgi network"/>
    <property type="evidence" value="ECO:0000314"/>
    <property type="project" value="UniProtKB"/>
</dbReference>
<dbReference type="GO" id="GO:0005484">
    <property type="term" value="F:SNAP receptor activity"/>
    <property type="evidence" value="ECO:0007669"/>
    <property type="project" value="InterPro"/>
</dbReference>
<dbReference type="GO" id="GO:0009658">
    <property type="term" value="P:chloroplast organization"/>
    <property type="evidence" value="ECO:0000315"/>
    <property type="project" value="UniProtKB"/>
</dbReference>
<dbReference type="GO" id="GO:0050832">
    <property type="term" value="P:defense response to fungus"/>
    <property type="evidence" value="ECO:0000315"/>
    <property type="project" value="UniProtKB"/>
</dbReference>
<dbReference type="GO" id="GO:0007030">
    <property type="term" value="P:Golgi organization"/>
    <property type="evidence" value="ECO:0000315"/>
    <property type="project" value="UniProtKB"/>
</dbReference>
<dbReference type="GO" id="GO:0043001">
    <property type="term" value="P:Golgi to plasma membrane protein transport"/>
    <property type="evidence" value="ECO:0000315"/>
    <property type="project" value="UniProtKB"/>
</dbReference>
<dbReference type="GO" id="GO:0006896">
    <property type="term" value="P:Golgi to vacuole transport"/>
    <property type="evidence" value="ECO:0000315"/>
    <property type="project" value="UniProtKB"/>
</dbReference>
<dbReference type="GO" id="GO:0006886">
    <property type="term" value="P:intracellular protein transport"/>
    <property type="evidence" value="ECO:0000315"/>
    <property type="project" value="UniProtKB"/>
</dbReference>
<dbReference type="GO" id="GO:0009306">
    <property type="term" value="P:protein secretion"/>
    <property type="evidence" value="ECO:0000316"/>
    <property type="project" value="TAIR"/>
</dbReference>
<dbReference type="GO" id="GO:1900150">
    <property type="term" value="P:regulation of defense response to fungus"/>
    <property type="evidence" value="ECO:0000316"/>
    <property type="project" value="TAIR"/>
</dbReference>
<dbReference type="GO" id="GO:0009863">
    <property type="term" value="P:salicylic acid mediated signaling pathway"/>
    <property type="evidence" value="ECO:0000315"/>
    <property type="project" value="UniProtKB"/>
</dbReference>
<dbReference type="GO" id="GO:0098629">
    <property type="term" value="P:trans-Golgi network membrane organization"/>
    <property type="evidence" value="ECO:0000315"/>
    <property type="project" value="UniProtKB"/>
</dbReference>
<dbReference type="GO" id="GO:0007034">
    <property type="term" value="P:vacuolar transport"/>
    <property type="evidence" value="ECO:0000316"/>
    <property type="project" value="TAIR"/>
</dbReference>
<dbReference type="GO" id="GO:0006906">
    <property type="term" value="P:vesicle fusion"/>
    <property type="evidence" value="ECO:0000314"/>
    <property type="project" value="UniProtKB"/>
</dbReference>
<dbReference type="CDD" id="cd15845">
    <property type="entry name" value="SNARE_syntaxin16"/>
    <property type="match status" value="1"/>
</dbReference>
<dbReference type="FunFam" id="1.20.58.70:FF:000010">
    <property type="entry name" value="Syntaxin-43"/>
    <property type="match status" value="1"/>
</dbReference>
<dbReference type="Gene3D" id="1.20.58.70">
    <property type="match status" value="1"/>
</dbReference>
<dbReference type="InterPro" id="IPR010989">
    <property type="entry name" value="SNARE"/>
</dbReference>
<dbReference type="InterPro" id="IPR045242">
    <property type="entry name" value="Syntaxin"/>
</dbReference>
<dbReference type="InterPro" id="IPR006012">
    <property type="entry name" value="Syntaxin/epimorphin_CS"/>
</dbReference>
<dbReference type="InterPro" id="IPR006011">
    <property type="entry name" value="Syntaxin_N"/>
</dbReference>
<dbReference type="InterPro" id="IPR000727">
    <property type="entry name" value="T_SNARE_dom"/>
</dbReference>
<dbReference type="PANTHER" id="PTHR19957">
    <property type="entry name" value="SYNTAXIN"/>
    <property type="match status" value="1"/>
</dbReference>
<dbReference type="PANTHER" id="PTHR19957:SF397">
    <property type="entry name" value="SYNTAXIN-42"/>
    <property type="match status" value="1"/>
</dbReference>
<dbReference type="Pfam" id="PF05739">
    <property type="entry name" value="SNARE"/>
    <property type="match status" value="1"/>
</dbReference>
<dbReference type="SMART" id="SM00503">
    <property type="entry name" value="SynN"/>
    <property type="match status" value="1"/>
</dbReference>
<dbReference type="SMART" id="SM00397">
    <property type="entry name" value="t_SNARE"/>
    <property type="match status" value="1"/>
</dbReference>
<dbReference type="SUPFAM" id="SSF47661">
    <property type="entry name" value="t-snare proteins"/>
    <property type="match status" value="1"/>
</dbReference>
<dbReference type="PROSITE" id="PS00914">
    <property type="entry name" value="SYNTAXIN"/>
    <property type="match status" value="1"/>
</dbReference>
<dbReference type="PROSITE" id="PS50192">
    <property type="entry name" value="T_SNARE"/>
    <property type="match status" value="1"/>
</dbReference>
<evidence type="ECO:0000255" key="1"/>
<evidence type="ECO:0000255" key="2">
    <source>
        <dbReference type="PROSITE-ProRule" id="PRU00202"/>
    </source>
</evidence>
<evidence type="ECO:0000269" key="3">
    <source>
    </source>
</evidence>
<evidence type="ECO:0000269" key="4">
    <source>
    </source>
</evidence>
<evidence type="ECO:0000269" key="5">
    <source>
    </source>
</evidence>
<evidence type="ECO:0000269" key="6">
    <source>
    </source>
</evidence>
<evidence type="ECO:0000269" key="7">
    <source>
    </source>
</evidence>
<evidence type="ECO:0000303" key="8">
    <source>
    </source>
</evidence>
<evidence type="ECO:0000303" key="9">
    <source>
    </source>
</evidence>
<evidence type="ECO:0000305" key="10"/>
<evidence type="ECO:0000312" key="11">
    <source>
        <dbReference type="Araport" id="AT4G02195"/>
    </source>
</evidence>
<evidence type="ECO:0000312" key="12">
    <source>
        <dbReference type="EMBL" id="AAC28171.1"/>
    </source>
</evidence>
<evidence type="ECO:0000312" key="13">
    <source>
        <dbReference type="EMBL" id="AAC78709.1"/>
    </source>
</evidence>
<gene>
    <name evidence="9" type="primary">SYP42</name>
    <name evidence="8" type="synonym">TLG2b</name>
    <name evidence="11" type="ordered locus">At4g02195</name>
    <name evidence="13" type="ORF">T10M13.19</name>
    <name evidence="12" type="ORF">T2H3.1</name>
</gene>
<comment type="function">
    <text evidence="6 7">Contributes to the regulation of secretory and vacuolar transport pathways in the post-Golgi network, and to the maintenance of the Golgi apparatus and trans-Golgi network (TGN) morphologies (PubMed:22307646). Vesicle trafficking protein that functions in the secretory pathway and mediates liposome fusion (PubMed:24021022). Required for extracellular resistance responses to a fungal pathogen (PubMed:22307646). Also involved in the protection of chloroplasts from salicylic acid-dependent biotic stress (PubMed:22307646).</text>
</comment>
<comment type="subunit">
    <text evidence="3 4">Interacts with VTI12 and SYP61 to form a t-SNARE complex and with VPS45.</text>
</comment>
<comment type="interaction">
    <interactant intactId="EBI-1750405">
        <id>Q9SWH4</id>
    </interactant>
    <interactant intactId="EBI-1750377">
        <id>O49048</id>
        <label>VPS45</label>
    </interactant>
    <organismsDiffer>false</organismsDiffer>
    <experiments>4</experiments>
</comment>
<comment type="subcellular location">
    <subcellularLocation>
        <location evidence="4 5 6">Golgi apparatus</location>
        <location evidence="4 5 6">trans-Golgi network membrane</location>
        <topology evidence="1">Single-pass type IV membrane protein</topology>
    </subcellularLocation>
    <text evidence="4">SYP42 is found in a different region of the TGN than SYP41.</text>
</comment>
<comment type="tissue specificity">
    <text evidence="5">Expressed at low levels in roots, stems, flowers and leaves.</text>
</comment>
<comment type="disruption phenotype">
    <text evidence="6">Gametophytic lethal in homozygote plants (PubMed:22307646). Slightly shorter roots (PubMed:22307646). The double mutant syp41 syp42 have short roots (PubMed:22307646). The double mutant syp42 syp43 exhibits severe pleiotropic defects, including short roots, a large number of lateral roots, semi dwarfism and early senescence; these phenotypes are associated with defective secretory and vacuolar transport pathways (PubMed:22307646). Double mutant plants syp42 syp43 have an increased sensitivity to the powdery fungus Golovinomyces orontii with leaf chlorosis in a pathogen-inducible salicylic acid (SA) biosynthesis-dependent manner, thus revealing a biotic stress-induced and SA-dependent chloroplast dysfunction (PubMed:22307646). Plants lacking the three genes SYP41 SYP42 and SYP43 are seedling lethals (PubMed:22307646).</text>
</comment>
<comment type="similarity">
    <text evidence="10">Belongs to the syntaxin family.</text>
</comment>
<comment type="sequence caution" evidence="10">
    <conflict type="erroneous gene model prediction">
        <sequence resource="EMBL-CDS" id="AAC28171"/>
    </conflict>
</comment>
<comment type="sequence caution" evidence="10">
    <conflict type="erroneous gene model prediction">
        <sequence resource="EMBL-CDS" id="AAC78709"/>
    </conflict>
</comment>
<protein>
    <recommendedName>
        <fullName evidence="9">Syntaxin-42</fullName>
        <shortName evidence="9">AtSYP42</shortName>
        <shortName evidence="8">AtTLG2b</shortName>
    </recommendedName>
</protein>
<accession>Q9SWH4</accession>
<accession>O04258</accession>
<accession>Q9SBD4</accession>
<name>SYP42_ARATH</name>
<sequence>MATRNRTTVYRKHRDACKSARAPLSLSASDSFGGPVIEMVSGSFSRSNHSSYAPLNSYDPGPSSSDAFTIGMPPAWVDDSEEITFNIQKVRDKMNELAKAHSKALMPTFGDNKGIHREVEMLTHEITDLLRKSEKRLQMLSTRGPSEESNLRKNVQRSLATDLQNLSMELRRKQSTYLKRLQQQKEGQDEVDLEFNVNGKMSRLDEEDELGGMGFDEHQTIKLKEGQHVSAEREREIQQVLGSVNDLAQIMKDLSALVIDQGTIVDRIDYNVQNVSTSVEEGYKQLQKAERTQREGAMVKCATILLVLCLIMIVLLILKNILF</sequence>
<feature type="chain" id="PRO_0000210259" description="Syntaxin-42">
    <location>
        <begin position="1"/>
        <end position="323"/>
    </location>
</feature>
<feature type="topological domain" description="Cytoplasmic" evidence="1">
    <location>
        <begin position="1"/>
        <end position="302"/>
    </location>
</feature>
<feature type="transmembrane region" description="Helical; Anchor for type IV membrane protein" evidence="1">
    <location>
        <begin position="303"/>
        <end position="323"/>
    </location>
</feature>
<feature type="domain" description="t-SNARE coiled-coil homology" evidence="2">
    <location>
        <begin position="227"/>
        <end position="289"/>
    </location>
</feature>